<dbReference type="EMBL" id="CP000812">
    <property type="protein sequence ID" value="ABV34603.1"/>
    <property type="molecule type" value="Genomic_DNA"/>
</dbReference>
<dbReference type="RefSeq" id="WP_012004079.1">
    <property type="nucleotide sequence ID" value="NZ_BSDV01000001.1"/>
</dbReference>
<dbReference type="SMR" id="A8F8W9"/>
<dbReference type="STRING" id="416591.Tlet_2049"/>
<dbReference type="KEGG" id="tle:Tlet_2049"/>
<dbReference type="eggNOG" id="COG0556">
    <property type="taxonomic scope" value="Bacteria"/>
</dbReference>
<dbReference type="HOGENOM" id="CLU_009621_2_1_0"/>
<dbReference type="OrthoDB" id="9806651at2"/>
<dbReference type="Proteomes" id="UP000002016">
    <property type="component" value="Chromosome"/>
</dbReference>
<dbReference type="GO" id="GO:0005737">
    <property type="term" value="C:cytoplasm"/>
    <property type="evidence" value="ECO:0007669"/>
    <property type="project" value="UniProtKB-SubCell"/>
</dbReference>
<dbReference type="GO" id="GO:0009380">
    <property type="term" value="C:excinuclease repair complex"/>
    <property type="evidence" value="ECO:0007669"/>
    <property type="project" value="InterPro"/>
</dbReference>
<dbReference type="GO" id="GO:0005524">
    <property type="term" value="F:ATP binding"/>
    <property type="evidence" value="ECO:0007669"/>
    <property type="project" value="UniProtKB-UniRule"/>
</dbReference>
<dbReference type="GO" id="GO:0016887">
    <property type="term" value="F:ATP hydrolysis activity"/>
    <property type="evidence" value="ECO:0007669"/>
    <property type="project" value="InterPro"/>
</dbReference>
<dbReference type="GO" id="GO:0003677">
    <property type="term" value="F:DNA binding"/>
    <property type="evidence" value="ECO:0007669"/>
    <property type="project" value="UniProtKB-UniRule"/>
</dbReference>
<dbReference type="GO" id="GO:0009381">
    <property type="term" value="F:excinuclease ABC activity"/>
    <property type="evidence" value="ECO:0007669"/>
    <property type="project" value="UniProtKB-UniRule"/>
</dbReference>
<dbReference type="GO" id="GO:0004386">
    <property type="term" value="F:helicase activity"/>
    <property type="evidence" value="ECO:0007669"/>
    <property type="project" value="UniProtKB-KW"/>
</dbReference>
<dbReference type="GO" id="GO:0006289">
    <property type="term" value="P:nucleotide-excision repair"/>
    <property type="evidence" value="ECO:0007669"/>
    <property type="project" value="UniProtKB-UniRule"/>
</dbReference>
<dbReference type="GO" id="GO:0009432">
    <property type="term" value="P:SOS response"/>
    <property type="evidence" value="ECO:0007669"/>
    <property type="project" value="UniProtKB-UniRule"/>
</dbReference>
<dbReference type="CDD" id="cd17916">
    <property type="entry name" value="DEXHc_UvrB"/>
    <property type="match status" value="1"/>
</dbReference>
<dbReference type="CDD" id="cd18790">
    <property type="entry name" value="SF2_C_UvrB"/>
    <property type="match status" value="1"/>
</dbReference>
<dbReference type="Gene3D" id="3.40.50.300">
    <property type="entry name" value="P-loop containing nucleotide triphosphate hydrolases"/>
    <property type="match status" value="3"/>
</dbReference>
<dbReference type="Gene3D" id="4.10.860.10">
    <property type="entry name" value="UVR domain"/>
    <property type="match status" value="1"/>
</dbReference>
<dbReference type="HAMAP" id="MF_00204">
    <property type="entry name" value="UvrB"/>
    <property type="match status" value="1"/>
</dbReference>
<dbReference type="InterPro" id="IPR006935">
    <property type="entry name" value="Helicase/UvrB_N"/>
</dbReference>
<dbReference type="InterPro" id="IPR014001">
    <property type="entry name" value="Helicase_ATP-bd"/>
</dbReference>
<dbReference type="InterPro" id="IPR001650">
    <property type="entry name" value="Helicase_C-like"/>
</dbReference>
<dbReference type="InterPro" id="IPR027417">
    <property type="entry name" value="P-loop_NTPase"/>
</dbReference>
<dbReference type="InterPro" id="IPR001943">
    <property type="entry name" value="UVR_dom"/>
</dbReference>
<dbReference type="InterPro" id="IPR036876">
    <property type="entry name" value="UVR_dom_sf"/>
</dbReference>
<dbReference type="InterPro" id="IPR004807">
    <property type="entry name" value="UvrB"/>
</dbReference>
<dbReference type="InterPro" id="IPR041471">
    <property type="entry name" value="UvrB_inter"/>
</dbReference>
<dbReference type="InterPro" id="IPR024759">
    <property type="entry name" value="UvrB_YAD/RRR_dom"/>
</dbReference>
<dbReference type="NCBIfam" id="NF003673">
    <property type="entry name" value="PRK05298.1"/>
    <property type="match status" value="1"/>
</dbReference>
<dbReference type="NCBIfam" id="TIGR00631">
    <property type="entry name" value="uvrb"/>
    <property type="match status" value="1"/>
</dbReference>
<dbReference type="PANTHER" id="PTHR24029">
    <property type="entry name" value="UVRABC SYSTEM PROTEIN B"/>
    <property type="match status" value="1"/>
</dbReference>
<dbReference type="PANTHER" id="PTHR24029:SF0">
    <property type="entry name" value="UVRABC SYSTEM PROTEIN B"/>
    <property type="match status" value="1"/>
</dbReference>
<dbReference type="Pfam" id="PF00271">
    <property type="entry name" value="Helicase_C"/>
    <property type="match status" value="1"/>
</dbReference>
<dbReference type="Pfam" id="PF04851">
    <property type="entry name" value="ResIII"/>
    <property type="match status" value="1"/>
</dbReference>
<dbReference type="Pfam" id="PF02151">
    <property type="entry name" value="UVR"/>
    <property type="match status" value="1"/>
</dbReference>
<dbReference type="Pfam" id="PF12344">
    <property type="entry name" value="UvrB"/>
    <property type="match status" value="1"/>
</dbReference>
<dbReference type="Pfam" id="PF17757">
    <property type="entry name" value="UvrB_inter"/>
    <property type="match status" value="1"/>
</dbReference>
<dbReference type="SMART" id="SM00487">
    <property type="entry name" value="DEXDc"/>
    <property type="match status" value="1"/>
</dbReference>
<dbReference type="SMART" id="SM00490">
    <property type="entry name" value="HELICc"/>
    <property type="match status" value="1"/>
</dbReference>
<dbReference type="SUPFAM" id="SSF46600">
    <property type="entry name" value="C-terminal UvrC-binding domain of UvrB"/>
    <property type="match status" value="1"/>
</dbReference>
<dbReference type="SUPFAM" id="SSF52540">
    <property type="entry name" value="P-loop containing nucleoside triphosphate hydrolases"/>
    <property type="match status" value="2"/>
</dbReference>
<dbReference type="PROSITE" id="PS51192">
    <property type="entry name" value="HELICASE_ATP_BIND_1"/>
    <property type="match status" value="1"/>
</dbReference>
<dbReference type="PROSITE" id="PS51194">
    <property type="entry name" value="HELICASE_CTER"/>
    <property type="match status" value="1"/>
</dbReference>
<dbReference type="PROSITE" id="PS50151">
    <property type="entry name" value="UVR"/>
    <property type="match status" value="1"/>
</dbReference>
<protein>
    <recommendedName>
        <fullName evidence="1">UvrABC system protein B</fullName>
        <shortName evidence="1">Protein UvrB</shortName>
    </recommendedName>
    <alternativeName>
        <fullName evidence="1">Excinuclease ABC subunit B</fullName>
    </alternativeName>
</protein>
<proteinExistence type="inferred from homology"/>
<keyword id="KW-0067">ATP-binding</keyword>
<keyword id="KW-0963">Cytoplasm</keyword>
<keyword id="KW-0227">DNA damage</keyword>
<keyword id="KW-0228">DNA excision</keyword>
<keyword id="KW-0234">DNA repair</keyword>
<keyword id="KW-0267">Excision nuclease</keyword>
<keyword id="KW-0347">Helicase</keyword>
<keyword id="KW-0378">Hydrolase</keyword>
<keyword id="KW-0547">Nucleotide-binding</keyword>
<keyword id="KW-1185">Reference proteome</keyword>
<keyword id="KW-0742">SOS response</keyword>
<name>UVRB_PSELT</name>
<comment type="function">
    <text evidence="1">The UvrABC repair system catalyzes the recognition and processing of DNA lesions. A damage recognition complex composed of 2 UvrA and 2 UvrB subunits scans DNA for abnormalities. Upon binding of the UvrA(2)B(2) complex to a putative damaged site, the DNA wraps around one UvrB monomer. DNA wrap is dependent on ATP binding by UvrB and probably causes local melting of the DNA helix, facilitating insertion of UvrB beta-hairpin between the DNA strands. Then UvrB probes one DNA strand for the presence of a lesion. If a lesion is found the UvrA subunits dissociate and the UvrB-DNA preincision complex is formed. This complex is subsequently bound by UvrC and the second UvrB is released. If no lesion is found, the DNA wraps around the other UvrB subunit that will check the other stand for damage.</text>
</comment>
<comment type="subunit">
    <text evidence="1">Forms a heterotetramer with UvrA during the search for lesions. Interacts with UvrC in an incision complex.</text>
</comment>
<comment type="subcellular location">
    <subcellularLocation>
        <location evidence="1">Cytoplasm</location>
    </subcellularLocation>
</comment>
<comment type="domain">
    <text evidence="1">The beta-hairpin motif is involved in DNA binding.</text>
</comment>
<comment type="similarity">
    <text evidence="1">Belongs to the UvrB family.</text>
</comment>
<sequence length="656" mass="75808">MFKLVSDYEPTGDQPQAIDRLVEGIKKGYRFQTLIGVTGSGKTFTMANVISRLNRPALVISPNKTLAAQLYGEFKTFFPHNRVEYFISYYDYYQPEAYVPTKDLYIEKNADINDVLVRMRMSALKSVRTRRDVVVVASVSSIYASGDPSDFDRMNIQLSTGLKISPHAVAQHLAKIGYERSNEITVKGCFRLRGDVLEIYPTYQDEGIRIEFFGSVVDRIETFDKLNRSPLEELQKIIIYPAIEFVTTEEKLKRAVESIKNELDQRLTELKNQGKILEAQRLQQRTMHDLELLSALGYCPGIENYSRHFDGRKPGEPPYTLLDYFDDDVLVFLDESHIAVPQLRAMWRGEHSRKKSLVEYGFRLPSAFDNRPLTFEEFLKKVPQIIFVSATPGPFEYQVSEQIVEQIIRPTGLIDPEVEVRPTKYQVDDLISEIKKVVERGERALITVLTKKTAEKLSEYLVEMGIKSLYIHSELDAIERIEVLKKLRRGDVDAVVGINLLREGLDLPEVSLVAILDSDKEGFLRSETTLIQIIGRVARNLNGKVLMYADRVTPAMQRAIDETNRRRKIQMEYNEKYGITPKTIVKPLQIEIFEKFMEKPEIDYHQLAKDLSKEEYLSLLEEEMYRAASELRYEDAAKLRDEIFRLREELKDENYL</sequence>
<organism>
    <name type="scientific">Pseudothermotoga lettingae (strain ATCC BAA-301 / DSM 14385 / NBRC 107922 / TMO)</name>
    <name type="common">Thermotoga lettingae</name>
    <dbReference type="NCBI Taxonomy" id="416591"/>
    <lineage>
        <taxon>Bacteria</taxon>
        <taxon>Thermotogati</taxon>
        <taxon>Thermotogota</taxon>
        <taxon>Thermotogae</taxon>
        <taxon>Thermotogales</taxon>
        <taxon>Thermotogaceae</taxon>
        <taxon>Pseudothermotoga</taxon>
    </lineage>
</organism>
<reference key="1">
    <citation type="submission" date="2007-08" db="EMBL/GenBank/DDBJ databases">
        <title>Complete sequence of Thermotoga lettingae TMO.</title>
        <authorList>
            <consortium name="US DOE Joint Genome Institute"/>
            <person name="Copeland A."/>
            <person name="Lucas S."/>
            <person name="Lapidus A."/>
            <person name="Barry K."/>
            <person name="Glavina del Rio T."/>
            <person name="Dalin E."/>
            <person name="Tice H."/>
            <person name="Pitluck S."/>
            <person name="Foster B."/>
            <person name="Bruce D."/>
            <person name="Schmutz J."/>
            <person name="Larimer F."/>
            <person name="Land M."/>
            <person name="Hauser L."/>
            <person name="Kyrpides N."/>
            <person name="Mikhailova N."/>
            <person name="Nelson K."/>
            <person name="Gogarten J.P."/>
            <person name="Noll K."/>
            <person name="Richardson P."/>
        </authorList>
    </citation>
    <scope>NUCLEOTIDE SEQUENCE [LARGE SCALE GENOMIC DNA]</scope>
    <source>
        <strain>ATCC BAA-301 / DSM 14385 / NBRC 107922 / TMO</strain>
    </source>
</reference>
<evidence type="ECO:0000255" key="1">
    <source>
        <dbReference type="HAMAP-Rule" id="MF_00204"/>
    </source>
</evidence>
<gene>
    <name evidence="1" type="primary">uvrB</name>
    <name type="ordered locus">Tlet_2049</name>
</gene>
<accession>A8F8W9</accession>
<feature type="chain" id="PRO_1000077939" description="UvrABC system protein B">
    <location>
        <begin position="1"/>
        <end position="656"/>
    </location>
</feature>
<feature type="domain" description="Helicase ATP-binding" evidence="1">
    <location>
        <begin position="23"/>
        <end position="180"/>
    </location>
</feature>
<feature type="domain" description="Helicase C-terminal" evidence="1">
    <location>
        <begin position="426"/>
        <end position="588"/>
    </location>
</feature>
<feature type="domain" description="UVR" evidence="1">
    <location>
        <begin position="614"/>
        <end position="649"/>
    </location>
</feature>
<feature type="short sequence motif" description="Beta-hairpin">
    <location>
        <begin position="89"/>
        <end position="112"/>
    </location>
</feature>
<feature type="binding site" evidence="1">
    <location>
        <begin position="36"/>
        <end position="43"/>
    </location>
    <ligand>
        <name>ATP</name>
        <dbReference type="ChEBI" id="CHEBI:30616"/>
    </ligand>
</feature>